<feature type="chain" id="PRO_0000076736" description="3-isopropylmalate dehydratase large subunit">
    <location>
        <begin position="1"/>
        <end position="479"/>
    </location>
</feature>
<feature type="binding site" evidence="1">
    <location>
        <position position="350"/>
    </location>
    <ligand>
        <name>[4Fe-4S] cluster</name>
        <dbReference type="ChEBI" id="CHEBI:49883"/>
    </ligand>
</feature>
<feature type="binding site" evidence="1">
    <location>
        <position position="415"/>
    </location>
    <ligand>
        <name>[4Fe-4S] cluster</name>
        <dbReference type="ChEBI" id="CHEBI:49883"/>
    </ligand>
</feature>
<feature type="binding site" evidence="1">
    <location>
        <position position="418"/>
    </location>
    <ligand>
        <name>[4Fe-4S] cluster</name>
        <dbReference type="ChEBI" id="CHEBI:49883"/>
    </ligand>
</feature>
<evidence type="ECO:0000255" key="1">
    <source>
        <dbReference type="HAMAP-Rule" id="MF_01026"/>
    </source>
</evidence>
<gene>
    <name evidence="1" type="primary">leuC</name>
    <name type="ordered locus">CC_0196</name>
</gene>
<comment type="function">
    <text evidence="1">Catalyzes the isomerization between 2-isopropylmalate and 3-isopropylmalate, via the formation of 2-isopropylmaleate.</text>
</comment>
<comment type="catalytic activity">
    <reaction evidence="1">
        <text>(2R,3S)-3-isopropylmalate = (2S)-2-isopropylmalate</text>
        <dbReference type="Rhea" id="RHEA:32287"/>
        <dbReference type="ChEBI" id="CHEBI:1178"/>
        <dbReference type="ChEBI" id="CHEBI:35121"/>
        <dbReference type="EC" id="4.2.1.33"/>
    </reaction>
</comment>
<comment type="cofactor">
    <cofactor evidence="1">
        <name>[4Fe-4S] cluster</name>
        <dbReference type="ChEBI" id="CHEBI:49883"/>
    </cofactor>
    <text evidence="1">Binds 1 [4Fe-4S] cluster per subunit.</text>
</comment>
<comment type="pathway">
    <text evidence="1">Amino-acid biosynthesis; L-leucine biosynthesis; L-leucine from 3-methyl-2-oxobutanoate: step 2/4.</text>
</comment>
<comment type="subunit">
    <text evidence="1">Heterodimer of LeuC and LeuD.</text>
</comment>
<comment type="similarity">
    <text evidence="1">Belongs to the aconitase/IPM isomerase family. LeuC type 1 subfamily.</text>
</comment>
<name>LEUC_CAUVC</name>
<reference key="1">
    <citation type="journal article" date="2001" name="Proc. Natl. Acad. Sci. U.S.A.">
        <title>Complete genome sequence of Caulobacter crescentus.</title>
        <authorList>
            <person name="Nierman W.C."/>
            <person name="Feldblyum T.V."/>
            <person name="Laub M.T."/>
            <person name="Paulsen I.T."/>
            <person name="Nelson K.E."/>
            <person name="Eisen J.A."/>
            <person name="Heidelberg J.F."/>
            <person name="Alley M.R.K."/>
            <person name="Ohta N."/>
            <person name="Maddock J.R."/>
            <person name="Potocka I."/>
            <person name="Nelson W.C."/>
            <person name="Newton A."/>
            <person name="Stephens C."/>
            <person name="Phadke N.D."/>
            <person name="Ely B."/>
            <person name="DeBoy R.T."/>
            <person name="Dodson R.J."/>
            <person name="Durkin A.S."/>
            <person name="Gwinn M.L."/>
            <person name="Haft D.H."/>
            <person name="Kolonay J.F."/>
            <person name="Smit J."/>
            <person name="Craven M.B."/>
            <person name="Khouri H.M."/>
            <person name="Shetty J."/>
            <person name="Berry K.J."/>
            <person name="Utterback T.R."/>
            <person name="Tran K."/>
            <person name="Wolf A.M."/>
            <person name="Vamathevan J.J."/>
            <person name="Ermolaeva M.D."/>
            <person name="White O."/>
            <person name="Salzberg S.L."/>
            <person name="Venter J.C."/>
            <person name="Shapiro L."/>
            <person name="Fraser C.M."/>
        </authorList>
    </citation>
    <scope>NUCLEOTIDE SEQUENCE [LARGE SCALE GENOMIC DNA]</scope>
    <source>
        <strain>ATCC 19089 / CIP 103742 / CB 15</strain>
    </source>
</reference>
<protein>
    <recommendedName>
        <fullName evidence="1">3-isopropylmalate dehydratase large subunit</fullName>
        <ecNumber evidence="1">4.2.1.33</ecNumber>
    </recommendedName>
    <alternativeName>
        <fullName evidence="1">Alpha-IPM isomerase</fullName>
        <shortName evidence="1">IPMI</shortName>
    </alternativeName>
    <alternativeName>
        <fullName evidence="1">Isopropylmalate isomerase</fullName>
    </alternativeName>
</protein>
<organism>
    <name type="scientific">Caulobacter vibrioides (strain ATCC 19089 / CIP 103742 / CB 15)</name>
    <name type="common">Caulobacter crescentus</name>
    <dbReference type="NCBI Taxonomy" id="190650"/>
    <lineage>
        <taxon>Bacteria</taxon>
        <taxon>Pseudomonadati</taxon>
        <taxon>Pseudomonadota</taxon>
        <taxon>Alphaproteobacteria</taxon>
        <taxon>Caulobacterales</taxon>
        <taxon>Caulobacteraceae</taxon>
        <taxon>Caulobacter</taxon>
    </lineage>
</organism>
<accession>Q9ABN0</accession>
<keyword id="KW-0004">4Fe-4S</keyword>
<keyword id="KW-0028">Amino-acid biosynthesis</keyword>
<keyword id="KW-0100">Branched-chain amino acid biosynthesis</keyword>
<keyword id="KW-0408">Iron</keyword>
<keyword id="KW-0411">Iron-sulfur</keyword>
<keyword id="KW-0432">Leucine biosynthesis</keyword>
<keyword id="KW-0456">Lyase</keyword>
<keyword id="KW-0479">Metal-binding</keyword>
<keyword id="KW-1185">Reference proteome</keyword>
<proteinExistence type="inferred from homology"/>
<sequence length="479" mass="50694">MSGKTLYDKIWDAHVVSEAGGEAILYIDLHLIHEVTTPQAFAGLRAAGRKVRRPDRTLAVADHNIPTEGQALGVDAVADEEARLQLKTLARNVADNGIEFFPMGDIRNGIVHVVGPEQGRTQPGMTIVCGDSHTSTHGAFGALAHGIGTSEVEHVLATQTLRQKKAKNMLVRVDGQLPPGVTGKDVALAVIGEIGTAGGTGYVIEFAGEAIAGLSMEGRMTLCNLTIEGGAKAGLVAPDDKTFAYIQGKPAAPKGAAWDMALSHWKTFFTDEDAVFDRTVVIDGSALVPMVTWGTSPEDVIPVTGNVPDPESFATPDKRAAAHRALDYMGLKAGQPISEARIDRVFIGSCTNSRIEDMRAAAAVVQEAFLHGRLVAPHVKAMVVPGSGLVKEQAEEEGLDAIFKAAGFDWREPGCSMCLAMNPDKLAPQERCASTSNRNFEGRQGRAGRTHLVSPAMAAAAAIAGHLVDVRTLFSETAQ</sequence>
<dbReference type="EC" id="4.2.1.33" evidence="1"/>
<dbReference type="EMBL" id="AE005673">
    <property type="protein sequence ID" value="AAK22183.1"/>
    <property type="molecule type" value="Genomic_DNA"/>
</dbReference>
<dbReference type="PIR" id="C87273">
    <property type="entry name" value="C87273"/>
</dbReference>
<dbReference type="RefSeq" id="NP_419015.1">
    <property type="nucleotide sequence ID" value="NC_002696.2"/>
</dbReference>
<dbReference type="RefSeq" id="WP_010918085.1">
    <property type="nucleotide sequence ID" value="NC_002696.2"/>
</dbReference>
<dbReference type="SMR" id="Q9ABN0"/>
<dbReference type="STRING" id="190650.CC_0196"/>
<dbReference type="EnsemblBacteria" id="AAK22183">
    <property type="protein sequence ID" value="AAK22183"/>
    <property type="gene ID" value="CC_0196"/>
</dbReference>
<dbReference type="KEGG" id="ccr:CC_0196"/>
<dbReference type="PATRIC" id="fig|190650.5.peg.193"/>
<dbReference type="eggNOG" id="COG0065">
    <property type="taxonomic scope" value="Bacteria"/>
</dbReference>
<dbReference type="HOGENOM" id="CLU_006714_3_4_5"/>
<dbReference type="BioCyc" id="CAULO:CC0196-MONOMER"/>
<dbReference type="UniPathway" id="UPA00048">
    <property type="reaction ID" value="UER00071"/>
</dbReference>
<dbReference type="Proteomes" id="UP000001816">
    <property type="component" value="Chromosome"/>
</dbReference>
<dbReference type="GO" id="GO:0003861">
    <property type="term" value="F:3-isopropylmalate dehydratase activity"/>
    <property type="evidence" value="ECO:0007669"/>
    <property type="project" value="UniProtKB-UniRule"/>
</dbReference>
<dbReference type="GO" id="GO:0051539">
    <property type="term" value="F:4 iron, 4 sulfur cluster binding"/>
    <property type="evidence" value="ECO:0007669"/>
    <property type="project" value="UniProtKB-KW"/>
</dbReference>
<dbReference type="GO" id="GO:0046872">
    <property type="term" value="F:metal ion binding"/>
    <property type="evidence" value="ECO:0007669"/>
    <property type="project" value="UniProtKB-KW"/>
</dbReference>
<dbReference type="GO" id="GO:0009098">
    <property type="term" value="P:L-leucine biosynthetic process"/>
    <property type="evidence" value="ECO:0007669"/>
    <property type="project" value="UniProtKB-UniRule"/>
</dbReference>
<dbReference type="CDD" id="cd01583">
    <property type="entry name" value="IPMI"/>
    <property type="match status" value="1"/>
</dbReference>
<dbReference type="FunFam" id="3.30.499.10:FF:000007">
    <property type="entry name" value="3-isopropylmalate dehydratase large subunit"/>
    <property type="match status" value="1"/>
</dbReference>
<dbReference type="Gene3D" id="3.30.499.10">
    <property type="entry name" value="Aconitase, domain 3"/>
    <property type="match status" value="2"/>
</dbReference>
<dbReference type="HAMAP" id="MF_01026">
    <property type="entry name" value="LeuC_type1"/>
    <property type="match status" value="1"/>
</dbReference>
<dbReference type="InterPro" id="IPR004430">
    <property type="entry name" value="3-IsopropMal_deHydase_lsu"/>
</dbReference>
<dbReference type="InterPro" id="IPR015931">
    <property type="entry name" value="Acnase/IPM_dHydase_lsu_aba_1/3"/>
</dbReference>
<dbReference type="InterPro" id="IPR001030">
    <property type="entry name" value="Acoase/IPM_deHydtase_lsu_aba"/>
</dbReference>
<dbReference type="InterPro" id="IPR018136">
    <property type="entry name" value="Aconitase_4Fe-4S_BS"/>
</dbReference>
<dbReference type="InterPro" id="IPR036008">
    <property type="entry name" value="Aconitase_4Fe-4S_dom"/>
</dbReference>
<dbReference type="InterPro" id="IPR050067">
    <property type="entry name" value="IPM_dehydratase_rel_enz"/>
</dbReference>
<dbReference type="InterPro" id="IPR033941">
    <property type="entry name" value="IPMI_cat"/>
</dbReference>
<dbReference type="NCBIfam" id="TIGR00170">
    <property type="entry name" value="leuC"/>
    <property type="match status" value="1"/>
</dbReference>
<dbReference type="NCBIfam" id="NF004016">
    <property type="entry name" value="PRK05478.1"/>
    <property type="match status" value="1"/>
</dbReference>
<dbReference type="NCBIfam" id="NF009116">
    <property type="entry name" value="PRK12466.1"/>
    <property type="match status" value="1"/>
</dbReference>
<dbReference type="PANTHER" id="PTHR43822:SF9">
    <property type="entry name" value="3-ISOPROPYLMALATE DEHYDRATASE"/>
    <property type="match status" value="1"/>
</dbReference>
<dbReference type="PANTHER" id="PTHR43822">
    <property type="entry name" value="HOMOACONITASE, MITOCHONDRIAL-RELATED"/>
    <property type="match status" value="1"/>
</dbReference>
<dbReference type="Pfam" id="PF00330">
    <property type="entry name" value="Aconitase"/>
    <property type="match status" value="1"/>
</dbReference>
<dbReference type="PRINTS" id="PR00415">
    <property type="entry name" value="ACONITASE"/>
</dbReference>
<dbReference type="SUPFAM" id="SSF53732">
    <property type="entry name" value="Aconitase iron-sulfur domain"/>
    <property type="match status" value="1"/>
</dbReference>
<dbReference type="PROSITE" id="PS00450">
    <property type="entry name" value="ACONITASE_1"/>
    <property type="match status" value="1"/>
</dbReference>
<dbReference type="PROSITE" id="PS01244">
    <property type="entry name" value="ACONITASE_2"/>
    <property type="match status" value="1"/>
</dbReference>